<feature type="chain" id="PRO_0000295588" description="Nuclear receptor 2C2-associated protein">
    <location>
        <begin position="1"/>
        <end position="136"/>
    </location>
</feature>
<evidence type="ECO:0000250" key="1"/>
<evidence type="ECO:0000305" key="2"/>
<sequence>MVTSVLSRGTVSRVSSVLNRDVKQFGKQFLFDGREETCWNSDQGSYQWVLMEFPQNVLVSQIHLQFQGGFSCQTCTLEGCQKDGELVKIADFYPEDTNALQKFAFSEQSVSKLRISFLNSTDFFGRITVYHLDVLG</sequence>
<proteinExistence type="evidence at transcript level"/>
<reference key="1">
    <citation type="submission" date="2005-10" db="EMBL/GenBank/DDBJ databases">
        <authorList>
            <consortium name="NIH - Xenopus Gene Collection (XGC) project"/>
        </authorList>
    </citation>
    <scope>NUCLEOTIDE SEQUENCE [LARGE SCALE MRNA]</scope>
    <source>
        <tissue>Testis</tissue>
    </source>
</reference>
<organism>
    <name type="scientific">Xenopus laevis</name>
    <name type="common">African clawed frog</name>
    <dbReference type="NCBI Taxonomy" id="8355"/>
    <lineage>
        <taxon>Eukaryota</taxon>
        <taxon>Metazoa</taxon>
        <taxon>Chordata</taxon>
        <taxon>Craniata</taxon>
        <taxon>Vertebrata</taxon>
        <taxon>Euteleostomi</taxon>
        <taxon>Amphibia</taxon>
        <taxon>Batrachia</taxon>
        <taxon>Anura</taxon>
        <taxon>Pipoidea</taxon>
        <taxon>Pipidae</taxon>
        <taxon>Xenopodinae</taxon>
        <taxon>Xenopus</taxon>
        <taxon>Xenopus</taxon>
    </lineage>
</organism>
<dbReference type="EMBL" id="BC106602">
    <property type="protein sequence ID" value="AAI06603.1"/>
    <property type="molecule type" value="mRNA"/>
</dbReference>
<dbReference type="RefSeq" id="NP_001089807.1">
    <property type="nucleotide sequence ID" value="NM_001096338.1"/>
</dbReference>
<dbReference type="SMR" id="Q3B8C3"/>
<dbReference type="DNASU" id="734872"/>
<dbReference type="GeneID" id="734872"/>
<dbReference type="KEGG" id="xla:734872"/>
<dbReference type="AGR" id="Xenbase:XB-GENE-6254998"/>
<dbReference type="CTD" id="734872"/>
<dbReference type="Xenbase" id="XB-GENE-6254998">
    <property type="gene designation" value="nr2c2ap.S"/>
</dbReference>
<dbReference type="OrthoDB" id="10052260at2759"/>
<dbReference type="Proteomes" id="UP000186698">
    <property type="component" value="Chromosome 1S"/>
</dbReference>
<dbReference type="Bgee" id="734872">
    <property type="expression patterns" value="Expressed in oocyte and 19 other cell types or tissues"/>
</dbReference>
<dbReference type="GO" id="GO:0005634">
    <property type="term" value="C:nucleus"/>
    <property type="evidence" value="ECO:0007669"/>
    <property type="project" value="UniProtKB-SubCell"/>
</dbReference>
<dbReference type="FunFam" id="2.60.120.260:FF:000070">
    <property type="entry name" value="Nuclear receptor 2C2-associated protein"/>
    <property type="match status" value="1"/>
</dbReference>
<dbReference type="Gene3D" id="2.60.120.260">
    <property type="entry name" value="Galactose-binding domain-like"/>
    <property type="match status" value="1"/>
</dbReference>
<dbReference type="InterPro" id="IPR008979">
    <property type="entry name" value="Galactose-bd-like_sf"/>
</dbReference>
<dbReference type="SUPFAM" id="SSF49785">
    <property type="entry name" value="Galactose-binding domain-like"/>
    <property type="match status" value="1"/>
</dbReference>
<gene>
    <name type="primary">nr2c2ap</name>
    <name type="synonym">tra16</name>
</gene>
<keyword id="KW-0539">Nucleus</keyword>
<keyword id="KW-1185">Reference proteome</keyword>
<accession>Q3B8C3</accession>
<name>NR2CA_XENLA</name>
<comment type="function">
    <text evidence="1">May act as a repressor of nr2c2-mediated transactivation by suppressing the binding between nr2c2 and its response element in target genes.</text>
</comment>
<comment type="subcellular location">
    <subcellularLocation>
        <location evidence="1">Nucleus</location>
    </subcellularLocation>
</comment>
<comment type="similarity">
    <text evidence="2">Belongs to the NR2C2AP family.</text>
</comment>
<protein>
    <recommendedName>
        <fullName>Nuclear receptor 2C2-associated protein</fullName>
    </recommendedName>
    <alternativeName>
        <fullName>TR4 orphan receptor-associated 16 kDa protein homolog</fullName>
    </alternativeName>
</protein>